<feature type="chain" id="PRO_1000079992" description="Exodeoxyribonuclease 7 large subunit">
    <location>
        <begin position="1"/>
        <end position="445"/>
    </location>
</feature>
<proteinExistence type="inferred from homology"/>
<comment type="function">
    <text evidence="1">Bidirectionally degrades single-stranded DNA into large acid-insoluble oligonucleotides, which are then degraded further into small acid-soluble oligonucleotides.</text>
</comment>
<comment type="catalytic activity">
    <reaction evidence="1">
        <text>Exonucleolytic cleavage in either 5'- to 3'- or 3'- to 5'-direction to yield nucleoside 5'-phosphates.</text>
        <dbReference type="EC" id="3.1.11.6"/>
    </reaction>
</comment>
<comment type="subunit">
    <text evidence="1">Heterooligomer composed of large and small subunits.</text>
</comment>
<comment type="subcellular location">
    <subcellularLocation>
        <location evidence="1">Cytoplasm</location>
    </subcellularLocation>
</comment>
<comment type="similarity">
    <text evidence="1">Belongs to the XseA family.</text>
</comment>
<dbReference type="EC" id="3.1.11.6" evidence="1"/>
<dbReference type="EMBL" id="CP000931">
    <property type="protein sequence ID" value="ABZ75942.1"/>
    <property type="molecule type" value="Genomic_DNA"/>
</dbReference>
<dbReference type="RefSeq" id="WP_012276482.1">
    <property type="nucleotide sequence ID" value="NC_010334.1"/>
</dbReference>
<dbReference type="SMR" id="B0TLJ2"/>
<dbReference type="STRING" id="458817.Shal_1375"/>
<dbReference type="KEGG" id="shl:Shal_1375"/>
<dbReference type="eggNOG" id="COG1570">
    <property type="taxonomic scope" value="Bacteria"/>
</dbReference>
<dbReference type="HOGENOM" id="CLU_023625_3_1_6"/>
<dbReference type="OrthoDB" id="9802795at2"/>
<dbReference type="Proteomes" id="UP000001317">
    <property type="component" value="Chromosome"/>
</dbReference>
<dbReference type="GO" id="GO:0005737">
    <property type="term" value="C:cytoplasm"/>
    <property type="evidence" value="ECO:0007669"/>
    <property type="project" value="UniProtKB-SubCell"/>
</dbReference>
<dbReference type="GO" id="GO:0009318">
    <property type="term" value="C:exodeoxyribonuclease VII complex"/>
    <property type="evidence" value="ECO:0007669"/>
    <property type="project" value="InterPro"/>
</dbReference>
<dbReference type="GO" id="GO:0008855">
    <property type="term" value="F:exodeoxyribonuclease VII activity"/>
    <property type="evidence" value="ECO:0007669"/>
    <property type="project" value="UniProtKB-UniRule"/>
</dbReference>
<dbReference type="GO" id="GO:0003676">
    <property type="term" value="F:nucleic acid binding"/>
    <property type="evidence" value="ECO:0007669"/>
    <property type="project" value="InterPro"/>
</dbReference>
<dbReference type="GO" id="GO:0006308">
    <property type="term" value="P:DNA catabolic process"/>
    <property type="evidence" value="ECO:0007669"/>
    <property type="project" value="UniProtKB-UniRule"/>
</dbReference>
<dbReference type="CDD" id="cd04489">
    <property type="entry name" value="ExoVII_LU_OBF"/>
    <property type="match status" value="1"/>
</dbReference>
<dbReference type="HAMAP" id="MF_00378">
    <property type="entry name" value="Exonuc_7_L"/>
    <property type="match status" value="1"/>
</dbReference>
<dbReference type="InterPro" id="IPR003753">
    <property type="entry name" value="Exonuc_VII_L"/>
</dbReference>
<dbReference type="InterPro" id="IPR020579">
    <property type="entry name" value="Exonuc_VII_lsu_C"/>
</dbReference>
<dbReference type="InterPro" id="IPR025824">
    <property type="entry name" value="OB-fold_nuc-bd_dom"/>
</dbReference>
<dbReference type="NCBIfam" id="TIGR00237">
    <property type="entry name" value="xseA"/>
    <property type="match status" value="1"/>
</dbReference>
<dbReference type="PANTHER" id="PTHR30008">
    <property type="entry name" value="EXODEOXYRIBONUCLEASE 7 LARGE SUBUNIT"/>
    <property type="match status" value="1"/>
</dbReference>
<dbReference type="PANTHER" id="PTHR30008:SF0">
    <property type="entry name" value="EXODEOXYRIBONUCLEASE 7 LARGE SUBUNIT"/>
    <property type="match status" value="1"/>
</dbReference>
<dbReference type="Pfam" id="PF02601">
    <property type="entry name" value="Exonuc_VII_L"/>
    <property type="match status" value="1"/>
</dbReference>
<dbReference type="Pfam" id="PF13742">
    <property type="entry name" value="tRNA_anti_2"/>
    <property type="match status" value="1"/>
</dbReference>
<reference key="1">
    <citation type="submission" date="2008-01" db="EMBL/GenBank/DDBJ databases">
        <title>Complete sequence of Shewanella halifaxensis HAW-EB4.</title>
        <authorList>
            <consortium name="US DOE Joint Genome Institute"/>
            <person name="Copeland A."/>
            <person name="Lucas S."/>
            <person name="Lapidus A."/>
            <person name="Glavina del Rio T."/>
            <person name="Dalin E."/>
            <person name="Tice H."/>
            <person name="Bruce D."/>
            <person name="Goodwin L."/>
            <person name="Pitluck S."/>
            <person name="Sims D."/>
            <person name="Brettin T."/>
            <person name="Detter J.C."/>
            <person name="Han C."/>
            <person name="Kuske C.R."/>
            <person name="Schmutz J."/>
            <person name="Larimer F."/>
            <person name="Land M."/>
            <person name="Hauser L."/>
            <person name="Kyrpides N."/>
            <person name="Kim E."/>
            <person name="Zhao J.-S."/>
            <person name="Richardson P."/>
        </authorList>
    </citation>
    <scope>NUCLEOTIDE SEQUENCE [LARGE SCALE GENOMIC DNA]</scope>
    <source>
        <strain>HAW-EB4</strain>
    </source>
</reference>
<keyword id="KW-0963">Cytoplasm</keyword>
<keyword id="KW-0269">Exonuclease</keyword>
<keyword id="KW-0378">Hydrolase</keyword>
<keyword id="KW-0540">Nuclease</keyword>
<sequence>MKTPKNDVYTVSRLNGEVRQLLEGQLGRIWLNAEISNFAAPGSGHWYLTLKDNFSQIRCAMFKGRNQAVTFRPANGQQVLVKGNISVYEPRGDYQLLIESMLPAGDGLLAQQYEALKMKLAAEGLFASDTKRSLPANIQRIGVVTSPTGAAIRDILHVLARRDASIEVIIYPTPVQGTDAAKSICDAINLANSRREVDVLLVTRGGGSLEDLWSFNDEGLAHTLYNSGIPVVSAVGHEVDMTISDYVADLRAPTPSAGAELLSKDADNKAQKLLSQLSRLKQSWQHYQLKKQNQLQACEHRLQKQDPQRRLQMYEQSFDEMQLRLQQAMQTKLHAYTLKQQNLSSRLASQSPQHRLDLEAQRLSYLSAKLNGAMIDKLKMSEQRLAHRAQQLDTVSPLATLSRGYSITLTGEGKVVQSPSDTCVGDTLTTRLRDGSVTSTVVEVG</sequence>
<evidence type="ECO:0000255" key="1">
    <source>
        <dbReference type="HAMAP-Rule" id="MF_00378"/>
    </source>
</evidence>
<name>EX7L_SHEHH</name>
<accession>B0TLJ2</accession>
<gene>
    <name evidence="1" type="primary">xseA</name>
    <name type="ordered locus">Shal_1375</name>
</gene>
<protein>
    <recommendedName>
        <fullName evidence="1">Exodeoxyribonuclease 7 large subunit</fullName>
        <ecNumber evidence="1">3.1.11.6</ecNumber>
    </recommendedName>
    <alternativeName>
        <fullName evidence="1">Exodeoxyribonuclease VII large subunit</fullName>
        <shortName evidence="1">Exonuclease VII large subunit</shortName>
    </alternativeName>
</protein>
<organism>
    <name type="scientific">Shewanella halifaxensis (strain HAW-EB4)</name>
    <dbReference type="NCBI Taxonomy" id="458817"/>
    <lineage>
        <taxon>Bacteria</taxon>
        <taxon>Pseudomonadati</taxon>
        <taxon>Pseudomonadota</taxon>
        <taxon>Gammaproteobacteria</taxon>
        <taxon>Alteromonadales</taxon>
        <taxon>Shewanellaceae</taxon>
        <taxon>Shewanella</taxon>
    </lineage>
</organism>